<reference key="1">
    <citation type="submission" date="2006-12" db="EMBL/GenBank/DDBJ databases">
        <title>Complete sequence of Shewanella sp. W3-18-1.</title>
        <authorList>
            <consortium name="US DOE Joint Genome Institute"/>
            <person name="Copeland A."/>
            <person name="Lucas S."/>
            <person name="Lapidus A."/>
            <person name="Barry K."/>
            <person name="Detter J.C."/>
            <person name="Glavina del Rio T."/>
            <person name="Hammon N."/>
            <person name="Israni S."/>
            <person name="Dalin E."/>
            <person name="Tice H."/>
            <person name="Pitluck S."/>
            <person name="Chain P."/>
            <person name="Malfatti S."/>
            <person name="Shin M."/>
            <person name="Vergez L."/>
            <person name="Schmutz J."/>
            <person name="Larimer F."/>
            <person name="Land M."/>
            <person name="Hauser L."/>
            <person name="Kyrpides N."/>
            <person name="Lykidis A."/>
            <person name="Tiedje J."/>
            <person name="Richardson P."/>
        </authorList>
    </citation>
    <scope>NUCLEOTIDE SEQUENCE [LARGE SCALE GENOMIC DNA]</scope>
    <source>
        <strain>W3-18-1</strain>
    </source>
</reference>
<feature type="chain" id="PRO_0000301929" description="3-hydroxyacyl-[acyl-carrier-protein] dehydratase FabZ">
    <location>
        <begin position="1"/>
        <end position="154"/>
    </location>
</feature>
<feature type="active site" evidence="1">
    <location>
        <position position="54"/>
    </location>
</feature>
<keyword id="KW-0963">Cytoplasm</keyword>
<keyword id="KW-0441">Lipid A biosynthesis</keyword>
<keyword id="KW-0444">Lipid biosynthesis</keyword>
<keyword id="KW-0443">Lipid metabolism</keyword>
<keyword id="KW-0456">Lyase</keyword>
<name>FABZ_SHESW</name>
<proteinExistence type="inferred from homology"/>
<gene>
    <name evidence="1" type="primary">fabZ</name>
    <name type="ordered locus">Sputw3181_2744</name>
</gene>
<organism>
    <name type="scientific">Shewanella sp. (strain W3-18-1)</name>
    <dbReference type="NCBI Taxonomy" id="351745"/>
    <lineage>
        <taxon>Bacteria</taxon>
        <taxon>Pseudomonadati</taxon>
        <taxon>Pseudomonadota</taxon>
        <taxon>Gammaproteobacteria</taxon>
        <taxon>Alteromonadales</taxon>
        <taxon>Shewanellaceae</taxon>
        <taxon>Shewanella</taxon>
    </lineage>
</organism>
<sequence>MSNQMNTMDITEILKYLPHRYPFLLIDRVLDYTPGESLHAIKNVSINEPFFQGHFPIQPVMPGVLILEAMAQATGLLAFKTMSNDVPPPGVLYYFAGIDNARFRRVVVPGDQIHFEVKMIKERRGIGVFYGEARVDGEVACSAEIMCARREINQ</sequence>
<comment type="function">
    <text evidence="1">Involved in unsaturated fatty acids biosynthesis. Catalyzes the dehydration of short chain beta-hydroxyacyl-ACPs and long chain saturated and unsaturated beta-hydroxyacyl-ACPs.</text>
</comment>
<comment type="catalytic activity">
    <reaction evidence="1">
        <text>a (3R)-hydroxyacyl-[ACP] = a (2E)-enoyl-[ACP] + H2O</text>
        <dbReference type="Rhea" id="RHEA:13097"/>
        <dbReference type="Rhea" id="RHEA-COMP:9925"/>
        <dbReference type="Rhea" id="RHEA-COMP:9945"/>
        <dbReference type="ChEBI" id="CHEBI:15377"/>
        <dbReference type="ChEBI" id="CHEBI:78784"/>
        <dbReference type="ChEBI" id="CHEBI:78827"/>
        <dbReference type="EC" id="4.2.1.59"/>
    </reaction>
</comment>
<comment type="subcellular location">
    <subcellularLocation>
        <location evidence="1">Cytoplasm</location>
    </subcellularLocation>
</comment>
<comment type="similarity">
    <text evidence="1">Belongs to the thioester dehydratase family. FabZ subfamily.</text>
</comment>
<accession>A1RLL6</accession>
<evidence type="ECO:0000255" key="1">
    <source>
        <dbReference type="HAMAP-Rule" id="MF_00406"/>
    </source>
</evidence>
<protein>
    <recommendedName>
        <fullName evidence="1">3-hydroxyacyl-[acyl-carrier-protein] dehydratase FabZ</fullName>
        <ecNumber evidence="1">4.2.1.59</ecNumber>
    </recommendedName>
    <alternativeName>
        <fullName evidence="1">(3R)-hydroxymyristoyl-[acyl-carrier-protein] dehydratase</fullName>
        <shortName evidence="1">(3R)-hydroxymyristoyl-ACP dehydrase</shortName>
    </alternativeName>
    <alternativeName>
        <fullName evidence="1">Beta-hydroxyacyl-ACP dehydratase</fullName>
    </alternativeName>
</protein>
<dbReference type="EC" id="4.2.1.59" evidence="1"/>
<dbReference type="EMBL" id="CP000503">
    <property type="protein sequence ID" value="ABM25561.1"/>
    <property type="molecule type" value="Genomic_DNA"/>
</dbReference>
<dbReference type="RefSeq" id="WP_011790017.1">
    <property type="nucleotide sequence ID" value="NC_008750.1"/>
</dbReference>
<dbReference type="SMR" id="A1RLL6"/>
<dbReference type="GeneID" id="67442879"/>
<dbReference type="KEGG" id="shw:Sputw3181_2744"/>
<dbReference type="HOGENOM" id="CLU_078912_1_0_6"/>
<dbReference type="Proteomes" id="UP000002597">
    <property type="component" value="Chromosome"/>
</dbReference>
<dbReference type="GO" id="GO:0005737">
    <property type="term" value="C:cytoplasm"/>
    <property type="evidence" value="ECO:0007669"/>
    <property type="project" value="UniProtKB-SubCell"/>
</dbReference>
<dbReference type="GO" id="GO:0016020">
    <property type="term" value="C:membrane"/>
    <property type="evidence" value="ECO:0007669"/>
    <property type="project" value="GOC"/>
</dbReference>
<dbReference type="GO" id="GO:0019171">
    <property type="term" value="F:(3R)-hydroxyacyl-[acyl-carrier-protein] dehydratase activity"/>
    <property type="evidence" value="ECO:0007669"/>
    <property type="project" value="UniProtKB-EC"/>
</dbReference>
<dbReference type="GO" id="GO:0006633">
    <property type="term" value="P:fatty acid biosynthetic process"/>
    <property type="evidence" value="ECO:0007669"/>
    <property type="project" value="UniProtKB-UniRule"/>
</dbReference>
<dbReference type="GO" id="GO:0009245">
    <property type="term" value="P:lipid A biosynthetic process"/>
    <property type="evidence" value="ECO:0007669"/>
    <property type="project" value="UniProtKB-UniRule"/>
</dbReference>
<dbReference type="CDD" id="cd01288">
    <property type="entry name" value="FabZ"/>
    <property type="match status" value="1"/>
</dbReference>
<dbReference type="FunFam" id="3.10.129.10:FF:000001">
    <property type="entry name" value="3-hydroxyacyl-[acyl-carrier-protein] dehydratase FabZ"/>
    <property type="match status" value="1"/>
</dbReference>
<dbReference type="Gene3D" id="3.10.129.10">
    <property type="entry name" value="Hotdog Thioesterase"/>
    <property type="match status" value="1"/>
</dbReference>
<dbReference type="HAMAP" id="MF_00406">
    <property type="entry name" value="FabZ"/>
    <property type="match status" value="1"/>
</dbReference>
<dbReference type="InterPro" id="IPR013114">
    <property type="entry name" value="FabA_FabZ"/>
</dbReference>
<dbReference type="InterPro" id="IPR010084">
    <property type="entry name" value="FabZ"/>
</dbReference>
<dbReference type="InterPro" id="IPR029069">
    <property type="entry name" value="HotDog_dom_sf"/>
</dbReference>
<dbReference type="NCBIfam" id="TIGR01750">
    <property type="entry name" value="fabZ"/>
    <property type="match status" value="1"/>
</dbReference>
<dbReference type="NCBIfam" id="NF000582">
    <property type="entry name" value="PRK00006.1"/>
    <property type="match status" value="1"/>
</dbReference>
<dbReference type="PANTHER" id="PTHR30272">
    <property type="entry name" value="3-HYDROXYACYL-[ACYL-CARRIER-PROTEIN] DEHYDRATASE"/>
    <property type="match status" value="1"/>
</dbReference>
<dbReference type="PANTHER" id="PTHR30272:SF1">
    <property type="entry name" value="3-HYDROXYACYL-[ACYL-CARRIER-PROTEIN] DEHYDRATASE"/>
    <property type="match status" value="1"/>
</dbReference>
<dbReference type="Pfam" id="PF07977">
    <property type="entry name" value="FabA"/>
    <property type="match status" value="1"/>
</dbReference>
<dbReference type="SUPFAM" id="SSF54637">
    <property type="entry name" value="Thioesterase/thiol ester dehydrase-isomerase"/>
    <property type="match status" value="1"/>
</dbReference>